<organism>
    <name type="scientific">Xenopus tropicalis</name>
    <name type="common">Western clawed frog</name>
    <name type="synonym">Silurana tropicalis</name>
    <dbReference type="NCBI Taxonomy" id="8364"/>
    <lineage>
        <taxon>Eukaryota</taxon>
        <taxon>Metazoa</taxon>
        <taxon>Chordata</taxon>
        <taxon>Craniata</taxon>
        <taxon>Vertebrata</taxon>
        <taxon>Euteleostomi</taxon>
        <taxon>Amphibia</taxon>
        <taxon>Batrachia</taxon>
        <taxon>Anura</taxon>
        <taxon>Pipoidea</taxon>
        <taxon>Pipidae</taxon>
        <taxon>Xenopodinae</taxon>
        <taxon>Xenopus</taxon>
        <taxon>Silurana</taxon>
    </lineage>
</organism>
<feature type="chain" id="PRO_0000271179" description="Forkhead box protein H1">
    <location>
        <begin position="1"/>
        <end position="515"/>
    </location>
</feature>
<feature type="DNA-binding region" description="Fork-head" evidence="4">
    <location>
        <begin position="110"/>
        <end position="206"/>
    </location>
</feature>
<feature type="region of interest" description="Disordered" evidence="5">
    <location>
        <begin position="55"/>
        <end position="103"/>
    </location>
</feature>
<feature type="region of interest" description="Disordered" evidence="5">
    <location>
        <begin position="307"/>
        <end position="399"/>
    </location>
</feature>
<feature type="region of interest" description="SMAD-interaction domain (SID)">
    <location>
        <begin position="377"/>
        <end position="503"/>
    </location>
</feature>
<feature type="short sequence motif" description="Fast/FoxH1 motif 1 (FM1)" evidence="3">
    <location>
        <begin position="402"/>
        <end position="406"/>
    </location>
</feature>
<feature type="short sequence motif" description="Fast/FoxH1 motif 2 (FM2)" evidence="3">
    <location>
        <begin position="412"/>
        <end position="418"/>
    </location>
</feature>
<feature type="short sequence motif" description="SMAD-interaction motif (SIM)">
    <location>
        <begin position="467"/>
        <end position="488"/>
    </location>
</feature>
<feature type="compositionally biased region" description="Polar residues" evidence="5">
    <location>
        <begin position="73"/>
        <end position="84"/>
    </location>
</feature>
<feature type="compositionally biased region" description="Low complexity" evidence="5">
    <location>
        <begin position="322"/>
        <end position="339"/>
    </location>
</feature>
<feature type="compositionally biased region" description="Polar residues" evidence="5">
    <location>
        <begin position="375"/>
        <end position="388"/>
    </location>
</feature>
<proteinExistence type="evidence at transcript level"/>
<evidence type="ECO:0000250" key="1"/>
<evidence type="ECO:0000250" key="2">
    <source>
        <dbReference type="UniProtKB" id="P70056"/>
    </source>
</evidence>
<evidence type="ECO:0000255" key="3"/>
<evidence type="ECO:0000255" key="4">
    <source>
        <dbReference type="PROSITE-ProRule" id="PRU00089"/>
    </source>
</evidence>
<evidence type="ECO:0000256" key="5">
    <source>
        <dbReference type="SAM" id="MobiDB-lite"/>
    </source>
</evidence>
<evidence type="ECO:0000305" key="6"/>
<evidence type="ECO:0000312" key="7">
    <source>
        <dbReference type="EMBL" id="CAJ81979.1"/>
    </source>
</evidence>
<protein>
    <recommendedName>
        <fullName>Forkhead box protein H1</fullName>
    </recommendedName>
    <alternativeName>
        <fullName>Forkhead activin signal transducer 1</fullName>
        <shortName>Fast-1</shortName>
    </alternativeName>
</protein>
<keyword id="KW-0010">Activator</keyword>
<keyword id="KW-0217">Developmental protein</keyword>
<keyword id="KW-0238">DNA-binding</keyword>
<keyword id="KW-0306">Gastrulation</keyword>
<keyword id="KW-0539">Nucleus</keyword>
<keyword id="KW-1185">Reference proteome</keyword>
<keyword id="KW-0804">Transcription</keyword>
<keyword id="KW-0805">Transcription regulation</keyword>
<reference evidence="7" key="1">
    <citation type="submission" date="2006-10" db="EMBL/GenBank/DDBJ databases">
        <authorList>
            <consortium name="Sanger Xenopus tropicalis EST/cDNA project"/>
        </authorList>
    </citation>
    <scope>NUCLEOTIDE SEQUENCE [LARGE SCALE MRNA]</scope>
    <source>
        <tissue evidence="7">Gastrula</tissue>
    </source>
</reference>
<dbReference type="EMBL" id="CR761447">
    <property type="protein sequence ID" value="CAJ81979.1"/>
    <property type="molecule type" value="mRNA"/>
</dbReference>
<dbReference type="RefSeq" id="NP_001017084.1">
    <property type="nucleotide sequence ID" value="NM_001017084.1"/>
</dbReference>
<dbReference type="SMR" id="Q28GC4"/>
<dbReference type="FunCoup" id="Q28GC4">
    <property type="interactions" value="411"/>
</dbReference>
<dbReference type="STRING" id="8364.ENSXETP00000034882"/>
<dbReference type="PaxDb" id="8364-ENSXETP00000045081"/>
<dbReference type="GeneID" id="549838"/>
<dbReference type="KEGG" id="xtr:549838"/>
<dbReference type="AGR" id="Xenbase:XB-GENE-1194372"/>
<dbReference type="CTD" id="8928"/>
<dbReference type="Xenbase" id="XB-GENE-1194372">
    <property type="gene designation" value="foxh1"/>
</dbReference>
<dbReference type="eggNOG" id="KOG2294">
    <property type="taxonomic scope" value="Eukaryota"/>
</dbReference>
<dbReference type="InParanoid" id="Q28GC4"/>
<dbReference type="OMA" id="QCPPSNS"/>
<dbReference type="OrthoDB" id="5954824at2759"/>
<dbReference type="Proteomes" id="UP000008143">
    <property type="component" value="Chromosome 6"/>
</dbReference>
<dbReference type="GO" id="GO:0005634">
    <property type="term" value="C:nucleus"/>
    <property type="evidence" value="ECO:0007669"/>
    <property type="project" value="UniProtKB-SubCell"/>
</dbReference>
<dbReference type="GO" id="GO:0005667">
    <property type="term" value="C:transcription regulator complex"/>
    <property type="evidence" value="ECO:0007669"/>
    <property type="project" value="UniProtKB-ARBA"/>
</dbReference>
<dbReference type="GO" id="GO:0003700">
    <property type="term" value="F:DNA-binding transcription factor activity"/>
    <property type="evidence" value="ECO:0007669"/>
    <property type="project" value="InterPro"/>
</dbReference>
<dbReference type="GO" id="GO:0061629">
    <property type="term" value="F:RNA polymerase II-specific DNA-binding transcription factor binding"/>
    <property type="evidence" value="ECO:0000250"/>
    <property type="project" value="UniProtKB"/>
</dbReference>
<dbReference type="GO" id="GO:0046332">
    <property type="term" value="F:SMAD binding"/>
    <property type="evidence" value="ECO:0007669"/>
    <property type="project" value="UniProtKB-ARBA"/>
</dbReference>
<dbReference type="GO" id="GO:0000976">
    <property type="term" value="F:transcription cis-regulatory region binding"/>
    <property type="evidence" value="ECO:0000250"/>
    <property type="project" value="UniProtKB"/>
</dbReference>
<dbReference type="GO" id="GO:0032924">
    <property type="term" value="P:activin receptor signaling pathway"/>
    <property type="evidence" value="ECO:0000250"/>
    <property type="project" value="UniProtKB"/>
</dbReference>
<dbReference type="GO" id="GO:0071345">
    <property type="term" value="P:cellular response to cytokine stimulus"/>
    <property type="evidence" value="ECO:0000250"/>
    <property type="project" value="UniProtKB"/>
</dbReference>
<dbReference type="GO" id="GO:0007369">
    <property type="term" value="P:gastrulation"/>
    <property type="evidence" value="ECO:0007669"/>
    <property type="project" value="UniProtKB-KW"/>
</dbReference>
<dbReference type="GO" id="GO:0045944">
    <property type="term" value="P:positive regulation of transcription by RNA polymerase II"/>
    <property type="evidence" value="ECO:0000250"/>
    <property type="project" value="UniProtKB"/>
</dbReference>
<dbReference type="CDD" id="cd20022">
    <property type="entry name" value="FH_FOXH"/>
    <property type="match status" value="1"/>
</dbReference>
<dbReference type="FunFam" id="1.10.10.10:FF:000278">
    <property type="entry name" value="Forkhead box protein H1"/>
    <property type="match status" value="1"/>
</dbReference>
<dbReference type="Gene3D" id="1.10.10.10">
    <property type="entry name" value="Winged helix-like DNA-binding domain superfamily/Winged helix DNA-binding domain"/>
    <property type="match status" value="1"/>
</dbReference>
<dbReference type="InterPro" id="IPR052327">
    <property type="entry name" value="Activin_resp_transcr_regulator"/>
</dbReference>
<dbReference type="InterPro" id="IPR047511">
    <property type="entry name" value="FH_FOXH1"/>
</dbReference>
<dbReference type="InterPro" id="IPR001766">
    <property type="entry name" value="Fork_head_dom"/>
</dbReference>
<dbReference type="InterPro" id="IPR030456">
    <property type="entry name" value="TF_fork_head_CS_2"/>
</dbReference>
<dbReference type="InterPro" id="IPR036388">
    <property type="entry name" value="WH-like_DNA-bd_sf"/>
</dbReference>
<dbReference type="InterPro" id="IPR036390">
    <property type="entry name" value="WH_DNA-bd_sf"/>
</dbReference>
<dbReference type="PANTHER" id="PTHR47316">
    <property type="entry name" value="FORKHEAD BOX PROTEIN H1"/>
    <property type="match status" value="1"/>
</dbReference>
<dbReference type="PANTHER" id="PTHR47316:SF2">
    <property type="entry name" value="FORKHEAD BOX PROTEIN H1"/>
    <property type="match status" value="1"/>
</dbReference>
<dbReference type="Pfam" id="PF00250">
    <property type="entry name" value="Forkhead"/>
    <property type="match status" value="1"/>
</dbReference>
<dbReference type="PRINTS" id="PR00053">
    <property type="entry name" value="FORKHEAD"/>
</dbReference>
<dbReference type="SMART" id="SM00339">
    <property type="entry name" value="FH"/>
    <property type="match status" value="1"/>
</dbReference>
<dbReference type="SUPFAM" id="SSF46785">
    <property type="entry name" value="Winged helix' DNA-binding domain"/>
    <property type="match status" value="1"/>
</dbReference>
<dbReference type="PROSITE" id="PS00658">
    <property type="entry name" value="FORK_HEAD_2"/>
    <property type="match status" value="1"/>
</dbReference>
<dbReference type="PROSITE" id="PS50039">
    <property type="entry name" value="FORK_HEAD_3"/>
    <property type="match status" value="1"/>
</dbReference>
<name>FOXH1_XENTR</name>
<accession>Q28GC4</accession>
<comment type="function">
    <text evidence="1">Transcriptional activator. Recognizes and binds to the DNA sequence 5'-TGT[GT][GT]ATT-3'. Upon TGF-beta induction, forms a transcriptionally active complex with smad2 and smad4 called activin-responsive factor 1 (ARF1), which binds a site on the mix-B/mix.2 promoter called the activin response element (ARE). Binds to activated smads and the ARE with much lower affinity than fast3. Necessary for the first steps in mesoderm specification, directly inducing mesodermal genes. Acts with fast3 to control the convergent extension movements of gastrulation. Binds to the proximal element (PE) of the gsc gene and cooperates with gtf2ird1/wbscr11 and SMAD proteins to regulate gsc transcription (By similarity).</text>
</comment>
<comment type="subunit">
    <text evidence="1">ARF1 contains 2 smad2s, 1 smad4 and 1 foxh1/fast-1 protein. Interaction with smad4 is most likely indirect through interaction with the MH2 domain of smad2. Binds to the MH2 domain of smad3, which can incorporate into the ARF1 complex. The ARF1 and ARF2 complexes are activated by distinct TGF-beta family members; formation of ARF1 is promoted by activin. Interacts (via Fork-head domain) with gtf2ird1/wbscr11 (via repeats 4-5) (By similarity).</text>
</comment>
<comment type="subcellular location">
    <subcellularLocation>
        <location evidence="3 6">Nucleus</location>
    </subcellularLocation>
</comment>
<comment type="domain">
    <text evidence="2">The FM region is required for binding smad2/smad4 complexes. FM2 is more effective than FM1 and only interacts with phosphorylated smad2 that is in an activated smad complex (By similarity).</text>
</comment>
<gene>
    <name evidence="7" type="primary">foxh1</name>
    <name type="ORF">TGas103n06.1</name>
</gene>
<sequence>MRDPSSLYAGFPVGSQYESVEPPSLALLSSIYQEQVPAAPGHSYEQCAQPWPPLYREGGTWSPDRGSMHGLSPGTQEGSCTQAEGTKDSLGGDETLSRKSKKKNYHRYAKPPYSYLAMIALVIQNSPEKRLKLSQILKEVSTLFPFFKGDYMGWKDSIRHNLSSNDCFKKVLKDPGKPQAKGNFWTVDVSRIPLDAMKLQNTALTRGGSDYFVQDLAPYILHNYKYEHNVVVYAPHHMPSHASSLPLAEDPHQTNTGGKLNTSFMIDSLLNDLQDVDLPDVPRNIESQRISPAVAINNMWSSAPLLYPQSKPTRNGRGPGFSASHSTYSSSSSSISTISPVGFQETQERSEDLLGRQTQRLGFPTKRPREDDGCSTPSSDTDAGNYSPTEPPKKMPLLSLDLPTSYTKSVAPNVVAPPSVLPFFHFPRFTYYNYGPSPYMTPPYWGFPRPTNPGGDSPRGPQTSLDLDNMLKTVPPNKSVFDVLTSHPGDLVHPSFLGQCLGSSGSPYPSRQGLM</sequence>